<keyword id="KW-0963">Cytoplasm</keyword>
<keyword id="KW-0238">DNA-binding</keyword>
<keyword id="KW-0804">Transcription</keyword>
<keyword id="KW-0805">Transcription regulation</keyword>
<sequence length="248" mass="26840">MAGHSKWANIKHKKAKEDAKRGKIFTKLIREITVAARLGGGDKDANPRLRAAIATALANNMSKDTIERAVVKGAGGDESANVEEVRYEGYGPGGVAIIVDCMTDNRNRTVGEVRHAFTKSGGNLGTDGSVAYMFTKRGIISFAPGVDEDALMEVALEAGAEDIITHEDGSIDVYTDPHDFSDIQEVLIEKGFNSENAEVTFDAETKAELDTETAEKVMALIDKLEDLDDVQNVYSNANFTQELIEQIG</sequence>
<evidence type="ECO:0000255" key="1">
    <source>
        <dbReference type="HAMAP-Rule" id="MF_00693"/>
    </source>
</evidence>
<name>Y655_FRAT1</name>
<organism>
    <name type="scientific">Francisella tularensis subsp. tularensis (strain FSC 198)</name>
    <dbReference type="NCBI Taxonomy" id="393115"/>
    <lineage>
        <taxon>Bacteria</taxon>
        <taxon>Pseudomonadati</taxon>
        <taxon>Pseudomonadota</taxon>
        <taxon>Gammaproteobacteria</taxon>
        <taxon>Thiotrichales</taxon>
        <taxon>Francisellaceae</taxon>
        <taxon>Francisella</taxon>
    </lineage>
</organism>
<proteinExistence type="inferred from homology"/>
<protein>
    <recommendedName>
        <fullName evidence="1">Probable transcriptional regulatory protein FTF0655</fullName>
    </recommendedName>
</protein>
<reference key="1">
    <citation type="journal article" date="2007" name="PLoS ONE">
        <title>Genome sequencing shows that European isolates of Francisella tularensis subspecies tularensis are almost identical to US laboratory strain Schu S4.</title>
        <authorList>
            <person name="Chaudhuri R.R."/>
            <person name="Ren C.-P."/>
            <person name="Desmond L."/>
            <person name="Vincent G.A."/>
            <person name="Silman N.J."/>
            <person name="Brehm J.K."/>
            <person name="Elmore M.J."/>
            <person name="Hudson M.J."/>
            <person name="Forsman M."/>
            <person name="Isherwood K.E."/>
            <person name="Gurycova D."/>
            <person name="Minton N.P."/>
            <person name="Titball R.W."/>
            <person name="Pallen M.J."/>
            <person name="Vipond R."/>
        </authorList>
    </citation>
    <scope>NUCLEOTIDE SEQUENCE [LARGE SCALE GENOMIC DNA]</scope>
    <source>
        <strain>FSC 198</strain>
    </source>
</reference>
<dbReference type="EMBL" id="AM286280">
    <property type="protein sequence ID" value="CAL08671.1"/>
    <property type="molecule type" value="Genomic_DNA"/>
</dbReference>
<dbReference type="RefSeq" id="WP_003020411.1">
    <property type="nucleotide sequence ID" value="NC_008245.1"/>
</dbReference>
<dbReference type="SMR" id="Q14IH1"/>
<dbReference type="KEGG" id="ftf:FTF0655"/>
<dbReference type="HOGENOM" id="CLU_062974_2_2_6"/>
<dbReference type="GO" id="GO:0005829">
    <property type="term" value="C:cytosol"/>
    <property type="evidence" value="ECO:0007669"/>
    <property type="project" value="TreeGrafter"/>
</dbReference>
<dbReference type="GO" id="GO:0003677">
    <property type="term" value="F:DNA binding"/>
    <property type="evidence" value="ECO:0007669"/>
    <property type="project" value="UniProtKB-UniRule"/>
</dbReference>
<dbReference type="GO" id="GO:0006355">
    <property type="term" value="P:regulation of DNA-templated transcription"/>
    <property type="evidence" value="ECO:0007669"/>
    <property type="project" value="UniProtKB-UniRule"/>
</dbReference>
<dbReference type="FunFam" id="1.10.10.200:FF:000001">
    <property type="entry name" value="Probable transcriptional regulatory protein YebC"/>
    <property type="match status" value="1"/>
</dbReference>
<dbReference type="FunFam" id="3.30.70.980:FF:000002">
    <property type="entry name" value="Probable transcriptional regulatory protein YebC"/>
    <property type="match status" value="1"/>
</dbReference>
<dbReference type="Gene3D" id="1.10.10.200">
    <property type="match status" value="1"/>
</dbReference>
<dbReference type="Gene3D" id="3.30.70.980">
    <property type="match status" value="2"/>
</dbReference>
<dbReference type="HAMAP" id="MF_00693">
    <property type="entry name" value="Transcrip_reg_TACO1"/>
    <property type="match status" value="1"/>
</dbReference>
<dbReference type="InterPro" id="IPR017856">
    <property type="entry name" value="Integrase-like_N"/>
</dbReference>
<dbReference type="InterPro" id="IPR048300">
    <property type="entry name" value="TACO1_YebC-like_2nd/3rd_dom"/>
</dbReference>
<dbReference type="InterPro" id="IPR049083">
    <property type="entry name" value="TACO1_YebC_N"/>
</dbReference>
<dbReference type="InterPro" id="IPR002876">
    <property type="entry name" value="Transcrip_reg_TACO1-like"/>
</dbReference>
<dbReference type="InterPro" id="IPR026564">
    <property type="entry name" value="Transcrip_reg_TACO1-like_dom3"/>
</dbReference>
<dbReference type="InterPro" id="IPR029072">
    <property type="entry name" value="YebC-like"/>
</dbReference>
<dbReference type="NCBIfam" id="NF001030">
    <property type="entry name" value="PRK00110.1"/>
    <property type="match status" value="1"/>
</dbReference>
<dbReference type="NCBIfam" id="NF009044">
    <property type="entry name" value="PRK12378.1"/>
    <property type="match status" value="1"/>
</dbReference>
<dbReference type="NCBIfam" id="TIGR01033">
    <property type="entry name" value="YebC/PmpR family DNA-binding transcriptional regulator"/>
    <property type="match status" value="1"/>
</dbReference>
<dbReference type="PANTHER" id="PTHR12532:SF6">
    <property type="entry name" value="TRANSCRIPTIONAL REGULATORY PROTEIN YEBC-RELATED"/>
    <property type="match status" value="1"/>
</dbReference>
<dbReference type="PANTHER" id="PTHR12532">
    <property type="entry name" value="TRANSLATIONAL ACTIVATOR OF CYTOCHROME C OXIDASE 1"/>
    <property type="match status" value="1"/>
</dbReference>
<dbReference type="Pfam" id="PF20772">
    <property type="entry name" value="TACO1_YebC_N"/>
    <property type="match status" value="1"/>
</dbReference>
<dbReference type="Pfam" id="PF01709">
    <property type="entry name" value="Transcrip_reg"/>
    <property type="match status" value="1"/>
</dbReference>
<dbReference type="SUPFAM" id="SSF75625">
    <property type="entry name" value="YebC-like"/>
    <property type="match status" value="1"/>
</dbReference>
<comment type="subcellular location">
    <subcellularLocation>
        <location evidence="1">Cytoplasm</location>
    </subcellularLocation>
</comment>
<comment type="similarity">
    <text evidence="1">Belongs to the TACO1 family.</text>
</comment>
<accession>Q14IH1</accession>
<gene>
    <name type="ordered locus">FTF0655</name>
</gene>
<feature type="chain" id="PRO_0000257067" description="Probable transcriptional regulatory protein FTF0655">
    <location>
        <begin position="1"/>
        <end position="248"/>
    </location>
</feature>